<keyword id="KW-0217">Developmental protein</keyword>
<keyword id="KW-1185">Reference proteome</keyword>
<keyword id="KW-0677">Repeat</keyword>
<keyword id="KW-0833">Ubl conjugation pathway</keyword>
<keyword id="KW-0853">WD repeat</keyword>
<keyword id="KW-0879">Wnt signaling pathway</keyword>
<accession>Q9JMJ2</accession>
<accession>Q9QXW3</accession>
<comment type="function">
    <text>Probably recognizes and binds to some phosphorylated proteins and promotes their ubiquitination and degradation. Likely to be involved in key signaling pathways crucial for normal limb development. May participate in Wnt signaling.</text>
</comment>
<comment type="subunit">
    <text evidence="2 3">Part of a SCF (SKP1-cullin-F-box) protein ligase complex (Probable). Interacts with POUF51 (PubMed:29153991).</text>
</comment>
<comment type="sequence caution" evidence="3">
    <conflict type="frameshift">
        <sequence resource="EMBL-CDS" id="AAF22827"/>
    </conflict>
</comment>
<proteinExistence type="evidence at protein level"/>
<protein>
    <recommendedName>
        <fullName>F-box/WD repeat-containing protein 4</fullName>
    </recommendedName>
    <alternativeName>
        <fullName>F-box and WD-40 domain-containing protein 4</fullName>
    </alternativeName>
    <alternativeName>
        <fullName>Protein hagoromo</fullName>
    </alternativeName>
</protein>
<gene>
    <name type="primary">Fbxw4</name>
    <name type="synonym">Fbw4</name>
</gene>
<evidence type="ECO:0000255" key="1">
    <source>
        <dbReference type="PROSITE-ProRule" id="PRU00080"/>
    </source>
</evidence>
<evidence type="ECO:0000269" key="2">
    <source>
    </source>
</evidence>
<evidence type="ECO:0000305" key="3"/>
<reference key="1">
    <citation type="journal article" date="2000" name="Curr. Biol.">
        <title>Proviral insertions in the zebrafish hagoromo gene, encoding an F-box/WD40-repeat protein, cause stripe pattern anomalies.</title>
        <authorList>
            <person name="Kawakami K."/>
            <person name="Amsterdam A."/>
            <person name="Shimoda N."/>
            <person name="Becker T."/>
            <person name="Mugg J."/>
            <person name="Shima A."/>
            <person name="Hopkins N."/>
        </authorList>
    </citation>
    <scope>NUCLEOTIDE SEQUENCE [MRNA]</scope>
</reference>
<reference key="2">
    <citation type="journal article" date="1999" name="Curr. Biol.">
        <title>A family of mammalian F-box proteins.</title>
        <authorList>
            <person name="Winston J.T."/>
            <person name="Koepp D.M."/>
            <person name="Zhu C."/>
            <person name="Elledge S.J."/>
            <person name="Harper J.W."/>
        </authorList>
    </citation>
    <scope>NUCLEOTIDE SEQUENCE [MRNA]</scope>
</reference>
<reference key="3">
    <citation type="journal article" date="2004" name="Genome Res.">
        <title>The status, quality, and expansion of the NIH full-length cDNA project: the Mammalian Gene Collection (MGC).</title>
        <authorList>
            <consortium name="The MGC Project Team"/>
        </authorList>
    </citation>
    <scope>NUCLEOTIDE SEQUENCE [LARGE SCALE MRNA]</scope>
    <source>
        <strain>C57BL/6J</strain>
        <tissue>Retina</tissue>
    </source>
</reference>
<reference key="4">
    <citation type="journal article" date="2017" name="Stem Cell Reports">
        <title>Serine 347 Phosphorylation by JNKs Negatively Regulates OCT4 Protein Stability in Mouse Embryonic Stem Cells.</title>
        <authorList>
            <person name="Bae K.B."/>
            <person name="Yu D.H."/>
            <person name="Lee K.Y."/>
            <person name="Yao K."/>
            <person name="Ryu J."/>
            <person name="Lim D.Y."/>
            <person name="Zykova T.A."/>
            <person name="Kim M.O."/>
            <person name="Bode A.M."/>
            <person name="Dong Z."/>
        </authorList>
    </citation>
    <scope>INTERACTION WITH POUF51</scope>
</reference>
<organism>
    <name type="scientific">Mus musculus</name>
    <name type="common">Mouse</name>
    <dbReference type="NCBI Taxonomy" id="10090"/>
    <lineage>
        <taxon>Eukaryota</taxon>
        <taxon>Metazoa</taxon>
        <taxon>Chordata</taxon>
        <taxon>Craniata</taxon>
        <taxon>Vertebrata</taxon>
        <taxon>Euteleostomi</taxon>
        <taxon>Mammalia</taxon>
        <taxon>Eutheria</taxon>
        <taxon>Euarchontoglires</taxon>
        <taxon>Glires</taxon>
        <taxon>Rodentia</taxon>
        <taxon>Myomorpha</taxon>
        <taxon>Muroidea</taxon>
        <taxon>Muridae</taxon>
        <taxon>Murinae</taxon>
        <taxon>Mus</taxon>
        <taxon>Mus</taxon>
    </lineage>
</organism>
<feature type="chain" id="PRO_0000050991" description="F-box/WD repeat-containing protein 4">
    <location>
        <begin position="1"/>
        <end position="410"/>
    </location>
</feature>
<feature type="domain" description="F-box" evidence="1">
    <location>
        <begin position="23"/>
        <end position="69"/>
    </location>
</feature>
<feature type="repeat" description="WD 1">
    <location>
        <begin position="159"/>
        <end position="196"/>
    </location>
</feature>
<feature type="repeat" description="WD 2">
    <location>
        <begin position="198"/>
        <end position="235"/>
    </location>
</feature>
<feature type="repeat" description="WD 3">
    <location>
        <begin position="289"/>
        <end position="327"/>
    </location>
</feature>
<feature type="repeat" description="WD 4">
    <location>
        <begin position="333"/>
        <end position="372"/>
    </location>
</feature>
<feature type="sequence conflict" description="In Ref. 2; AAF22827." evidence="3" ref="2">
    <original>S</original>
    <variation>F</variation>
    <location>
        <position position="39"/>
    </location>
</feature>
<feature type="sequence conflict" description="In Ref. 2; AAF22827." evidence="3" ref="2">
    <original>GRLA</original>
    <variation>APG</variation>
    <location>
        <begin position="47"/>
        <end position="50"/>
    </location>
</feature>
<feature type="sequence conflict" description="In Ref. 2; AAF22827." evidence="3" ref="2">
    <original>R</original>
    <variation>A</variation>
    <location>
        <position position="58"/>
    </location>
</feature>
<feature type="sequence conflict" description="In Ref. 2; AAF22827." evidence="3" ref="2">
    <original>V</original>
    <variation>I</variation>
    <location>
        <position position="185"/>
    </location>
</feature>
<feature type="sequence conflict" description="In Ref. 2; AAF22827." evidence="3" ref="2">
    <original>R</original>
    <variation>M</variation>
    <location>
        <position position="218"/>
    </location>
</feature>
<feature type="sequence conflict" description="In Ref. 2." evidence="3" ref="2">
    <original>AKVWPLASG</original>
    <variation>SKVPFAASV</variation>
    <location>
        <begin position="222"/>
        <end position="230"/>
    </location>
</feature>
<feature type="sequence conflict" description="In Ref. 2." evidence="3" ref="2">
    <original>T</original>
    <variation>I</variation>
    <location>
        <position position="241"/>
    </location>
</feature>
<feature type="sequence conflict" description="In Ref. 2." evidence="3" ref="2">
    <original>A</original>
    <variation>V</variation>
    <location>
        <position position="249"/>
    </location>
</feature>
<feature type="sequence conflict" description="In Ref. 2." evidence="3" ref="2">
    <original>W</original>
    <variation>C</variation>
    <location>
        <position position="273"/>
    </location>
</feature>
<sequence length="410" mass="46142">MAEDAAEDAAAAAVEPATRPAAGPALWRLPEELLLLICSYLDTRALGRLAQVCRWLRRFTSCDLLWRPIARASLNTGFTRLGTDLMAGIPVKERVKLSQNWRLGRCRDRILLKWRYSQMPWMQLQDASLYLSQANFILAYQFRPDGASLNRRPFRVFSGHDEDVCHFVLANSHIVSAGGDGKIGVHKIHSTFTVKYSAHEQEVNCVDCKGGIIVSGSRDRTAKVWPLASGRLGQCLHTIQTEDRVWSIAISPLLSSFVTGTACCGHFSPLRIWDLNSGQLITHLGSDFPPGAGVLDVMYESPSTLLSCGYDTYVRYWDLRTSTRKCVMEWEEPHDSTFYCLQTDGNHLLATGSSYYGLVRLWDRRQRACLHAFSLTSTPLSSPVYCLRFTTRHLYAALSYNLHVLDFQNP</sequence>
<name>FBXW4_MOUSE</name>
<dbReference type="EMBL" id="AB022163">
    <property type="protein sequence ID" value="BAA94666.1"/>
    <property type="molecule type" value="mRNA"/>
</dbReference>
<dbReference type="EMBL" id="AF176519">
    <property type="protein sequence ID" value="AAF22827.1"/>
    <property type="status" value="ALT_FRAME"/>
    <property type="molecule type" value="mRNA"/>
</dbReference>
<dbReference type="EMBL" id="BC027031">
    <property type="protein sequence ID" value="AAH27031.1"/>
    <property type="molecule type" value="mRNA"/>
</dbReference>
<dbReference type="RefSeq" id="NP_038935.1">
    <property type="nucleotide sequence ID" value="NM_013907.2"/>
</dbReference>
<dbReference type="SMR" id="Q9JMJ2"/>
<dbReference type="BioGRID" id="205975">
    <property type="interactions" value="7"/>
</dbReference>
<dbReference type="FunCoup" id="Q9JMJ2">
    <property type="interactions" value="125"/>
</dbReference>
<dbReference type="STRING" id="10090.ENSMUSP00000036505"/>
<dbReference type="PhosphoSitePlus" id="Q9JMJ2"/>
<dbReference type="PaxDb" id="10090-ENSMUSP00000036505"/>
<dbReference type="ProteomicsDB" id="267361"/>
<dbReference type="Antibodypedia" id="31311">
    <property type="antibodies" value="231 antibodies from 27 providers"/>
</dbReference>
<dbReference type="DNASU" id="30838"/>
<dbReference type="Ensembl" id="ENSMUST00000046869.11">
    <property type="protein sequence ID" value="ENSMUSP00000036505.5"/>
    <property type="gene ID" value="ENSMUSG00000040913.12"/>
</dbReference>
<dbReference type="GeneID" id="30838"/>
<dbReference type="KEGG" id="mmu:30838"/>
<dbReference type="UCSC" id="uc008hrf.1">
    <property type="organism name" value="mouse"/>
</dbReference>
<dbReference type="AGR" id="MGI:1354698"/>
<dbReference type="CTD" id="6468"/>
<dbReference type="MGI" id="MGI:1354698">
    <property type="gene designation" value="Fbxw4"/>
</dbReference>
<dbReference type="VEuPathDB" id="HostDB:ENSMUSG00000040913"/>
<dbReference type="eggNOG" id="ENOG502QV15">
    <property type="taxonomic scope" value="Eukaryota"/>
</dbReference>
<dbReference type="GeneTree" id="ENSGT00390000005029"/>
<dbReference type="HOGENOM" id="CLU_034660_0_0_1"/>
<dbReference type="InParanoid" id="Q9JMJ2"/>
<dbReference type="OMA" id="LTHFDMV"/>
<dbReference type="OrthoDB" id="435188at2759"/>
<dbReference type="PhylomeDB" id="Q9JMJ2"/>
<dbReference type="TreeFam" id="TF325020"/>
<dbReference type="Reactome" id="R-MMU-8951664">
    <property type="pathway name" value="Neddylation"/>
</dbReference>
<dbReference type="Reactome" id="R-MMU-983168">
    <property type="pathway name" value="Antigen processing: Ubiquitination &amp; Proteasome degradation"/>
</dbReference>
<dbReference type="BioGRID-ORCS" id="30838">
    <property type="hits" value="2 hits in 77 CRISPR screens"/>
</dbReference>
<dbReference type="ChiTaRS" id="Fbxw4">
    <property type="organism name" value="mouse"/>
</dbReference>
<dbReference type="PRO" id="PR:Q9JMJ2"/>
<dbReference type="Proteomes" id="UP000000589">
    <property type="component" value="Chromosome 19"/>
</dbReference>
<dbReference type="RNAct" id="Q9JMJ2">
    <property type="molecule type" value="protein"/>
</dbReference>
<dbReference type="Bgee" id="ENSMUSG00000040913">
    <property type="expression patterns" value="Expressed in secondary oocyte and 251 other cell types or tissues"/>
</dbReference>
<dbReference type="ExpressionAtlas" id="Q9JMJ2">
    <property type="expression patterns" value="baseline and differential"/>
</dbReference>
<dbReference type="GO" id="GO:0051216">
    <property type="term" value="P:cartilage development"/>
    <property type="evidence" value="ECO:0000315"/>
    <property type="project" value="MGI"/>
</dbReference>
<dbReference type="GO" id="GO:0042733">
    <property type="term" value="P:embryonic digit morphogenesis"/>
    <property type="evidence" value="ECO:0000315"/>
    <property type="project" value="MGI"/>
</dbReference>
<dbReference type="GO" id="GO:0060173">
    <property type="term" value="P:limb development"/>
    <property type="evidence" value="ECO:0000315"/>
    <property type="project" value="MGI"/>
</dbReference>
<dbReference type="GO" id="GO:0002053">
    <property type="term" value="P:positive regulation of mesenchymal cell proliferation"/>
    <property type="evidence" value="ECO:0000315"/>
    <property type="project" value="MGI"/>
</dbReference>
<dbReference type="GO" id="GO:0016055">
    <property type="term" value="P:Wnt signaling pathway"/>
    <property type="evidence" value="ECO:0007669"/>
    <property type="project" value="UniProtKB-KW"/>
</dbReference>
<dbReference type="CDD" id="cd20090">
    <property type="entry name" value="F-box_FBXW4"/>
    <property type="match status" value="1"/>
</dbReference>
<dbReference type="FunFam" id="2.130.10.10:FF:000376">
    <property type="entry name" value="F-box and WD repeat domain containing 4"/>
    <property type="match status" value="1"/>
</dbReference>
<dbReference type="FunFam" id="1.20.1280.50:FF:000031">
    <property type="entry name" value="F-box/WD repeat-containing protein 4 isoform X1"/>
    <property type="match status" value="1"/>
</dbReference>
<dbReference type="FunFam" id="2.130.10.10:FF:000327">
    <property type="entry name" value="F-box/WD repeat-containing protein 4 isoform X1"/>
    <property type="match status" value="1"/>
</dbReference>
<dbReference type="Gene3D" id="1.20.1280.50">
    <property type="match status" value="1"/>
</dbReference>
<dbReference type="Gene3D" id="2.130.10.10">
    <property type="entry name" value="YVTN repeat-like/Quinoprotein amine dehydrogenase"/>
    <property type="match status" value="2"/>
</dbReference>
<dbReference type="InterPro" id="IPR036047">
    <property type="entry name" value="F-box-like_dom_sf"/>
</dbReference>
<dbReference type="InterPro" id="IPR001810">
    <property type="entry name" value="F-box_dom"/>
</dbReference>
<dbReference type="InterPro" id="IPR052301">
    <property type="entry name" value="SCF_F-box/WD-repeat"/>
</dbReference>
<dbReference type="InterPro" id="IPR015943">
    <property type="entry name" value="WD40/YVTN_repeat-like_dom_sf"/>
</dbReference>
<dbReference type="InterPro" id="IPR036322">
    <property type="entry name" value="WD40_repeat_dom_sf"/>
</dbReference>
<dbReference type="InterPro" id="IPR001680">
    <property type="entry name" value="WD40_rpt"/>
</dbReference>
<dbReference type="PANTHER" id="PTHR14381">
    <property type="entry name" value="DACTYLIN"/>
    <property type="match status" value="1"/>
</dbReference>
<dbReference type="PANTHER" id="PTHR14381:SF1">
    <property type="entry name" value="F-BOX_WD REPEAT-CONTAINING PROTEIN 4"/>
    <property type="match status" value="1"/>
</dbReference>
<dbReference type="Pfam" id="PF12937">
    <property type="entry name" value="F-box-like"/>
    <property type="match status" value="1"/>
</dbReference>
<dbReference type="Pfam" id="PF00400">
    <property type="entry name" value="WD40"/>
    <property type="match status" value="2"/>
</dbReference>
<dbReference type="SMART" id="SM00320">
    <property type="entry name" value="WD40"/>
    <property type="match status" value="5"/>
</dbReference>
<dbReference type="SUPFAM" id="SSF81383">
    <property type="entry name" value="F-box domain"/>
    <property type="match status" value="1"/>
</dbReference>
<dbReference type="SUPFAM" id="SSF50978">
    <property type="entry name" value="WD40 repeat-like"/>
    <property type="match status" value="1"/>
</dbReference>
<dbReference type="PROSITE" id="PS50181">
    <property type="entry name" value="FBOX"/>
    <property type="match status" value="1"/>
</dbReference>
<dbReference type="PROSITE" id="PS50082">
    <property type="entry name" value="WD_REPEATS_2"/>
    <property type="match status" value="1"/>
</dbReference>
<dbReference type="PROSITE" id="PS50294">
    <property type="entry name" value="WD_REPEATS_REGION"/>
    <property type="match status" value="1"/>
</dbReference>